<keyword id="KW-0025">Alternative splicing</keyword>
<keyword id="KW-0053">Apoptosis</keyword>
<keyword id="KW-1015">Disulfide bond</keyword>
<keyword id="KW-0256">Endoplasmic reticulum</keyword>
<keyword id="KW-0325">Glycoprotein</keyword>
<keyword id="KW-0611">Plant defense</keyword>
<keyword id="KW-0646">Protease inhibitor</keyword>
<keyword id="KW-1185">Reference proteome</keyword>
<keyword id="KW-0722">Serine protease inhibitor</keyword>
<keyword id="KW-0732">Signal</keyword>
<keyword id="KW-0789">Thiol protease inhibitor</keyword>
<sequence>MTKTTKTMNPKFYLVLALTAVLASNAYGAVVDIDGNAMFHESYYVLPVIRGRGGGLTLAGRGGQPCPYDIVQESSEVDEGIPVKFSNWRLKVAFVPESQNLNIETDVGATICIQSTYWRVGEFDHERKQYFVVAGPKPEGFGQDSLKSFFKIEKSGEDAYKFVFCPRTCDSGNPKCSDVGIFIDELGVRRLALSDKPFLVMFKKANVTEVSSKTM</sequence>
<evidence type="ECO:0000250" key="1">
    <source>
        <dbReference type="UniProtKB" id="P01070"/>
    </source>
</evidence>
<evidence type="ECO:0000255" key="2"/>
<evidence type="ECO:0000255" key="3">
    <source>
        <dbReference type="PROSITE-ProRule" id="PRU00498"/>
    </source>
</evidence>
<evidence type="ECO:0000269" key="4">
    <source>
    </source>
</evidence>
<evidence type="ECO:0000269" key="5">
    <source>
    </source>
</evidence>
<evidence type="ECO:0000269" key="6">
    <source>
    </source>
</evidence>
<evidence type="ECO:0000269" key="7">
    <source>
    </source>
</evidence>
<evidence type="ECO:0000303" key="8">
    <source>
    </source>
</evidence>
<evidence type="ECO:0000303" key="9">
    <source>
    </source>
</evidence>
<evidence type="ECO:0000303" key="10">
    <source>
    </source>
</evidence>
<evidence type="ECO:0000305" key="11"/>
<evidence type="ECO:0000312" key="12">
    <source>
        <dbReference type="Araport" id="AT1G73260"/>
    </source>
</evidence>
<evidence type="ECO:0000312" key="13">
    <source>
        <dbReference type="EMBL" id="AAG52121.1"/>
    </source>
</evidence>
<organism>
    <name type="scientific">Arabidopsis thaliana</name>
    <name type="common">Mouse-ear cress</name>
    <dbReference type="NCBI Taxonomy" id="3702"/>
    <lineage>
        <taxon>Eukaryota</taxon>
        <taxon>Viridiplantae</taxon>
        <taxon>Streptophyta</taxon>
        <taxon>Embryophyta</taxon>
        <taxon>Tracheophyta</taxon>
        <taxon>Spermatophyta</taxon>
        <taxon>Magnoliopsida</taxon>
        <taxon>eudicotyledons</taxon>
        <taxon>Gunneridae</taxon>
        <taxon>Pentapetalae</taxon>
        <taxon>rosids</taxon>
        <taxon>malvids</taxon>
        <taxon>Brassicales</taxon>
        <taxon>Brassicaceae</taxon>
        <taxon>Camelineae</taxon>
        <taxon>Arabidopsis</taxon>
    </lineage>
</organism>
<dbReference type="EMBL" id="AC010556">
    <property type="protein sequence ID" value="AAG52121.1"/>
    <property type="status" value="ALT_INIT"/>
    <property type="molecule type" value="Genomic_DNA"/>
</dbReference>
<dbReference type="EMBL" id="CP002684">
    <property type="protein sequence ID" value="AEE35435.1"/>
    <property type="molecule type" value="Genomic_DNA"/>
</dbReference>
<dbReference type="EMBL" id="AY054566">
    <property type="protein sequence ID" value="AAK96757.1"/>
    <property type="molecule type" value="mRNA"/>
</dbReference>
<dbReference type="EMBL" id="AY081323">
    <property type="protein sequence ID" value="AAL91212.1"/>
    <property type="molecule type" value="mRNA"/>
</dbReference>
<dbReference type="EMBL" id="BT000366">
    <property type="protein sequence ID" value="AAN15685.1"/>
    <property type="molecule type" value="mRNA"/>
</dbReference>
<dbReference type="EMBL" id="BT002548">
    <property type="protein sequence ID" value="AAO00908.1"/>
    <property type="molecule type" value="mRNA"/>
</dbReference>
<dbReference type="EMBL" id="AK230302">
    <property type="protein sequence ID" value="BAF02103.1"/>
    <property type="molecule type" value="mRNA"/>
</dbReference>
<dbReference type="PIR" id="G96758">
    <property type="entry name" value="G96758"/>
</dbReference>
<dbReference type="RefSeq" id="NP_565061.1">
    <molecule id="Q8RXD5-1"/>
    <property type="nucleotide sequence ID" value="NM_105985.3"/>
</dbReference>
<dbReference type="SMR" id="Q8RXD5"/>
<dbReference type="FunCoup" id="Q8RXD5">
    <property type="interactions" value="71"/>
</dbReference>
<dbReference type="IntAct" id="Q8RXD5">
    <property type="interactions" value="1"/>
</dbReference>
<dbReference type="STRING" id="3702.Q8RXD5"/>
<dbReference type="MEROPS" id="I03.031"/>
<dbReference type="GlyCosmos" id="Q8RXD5">
    <property type="glycosylation" value="1 site, No reported glycans"/>
</dbReference>
<dbReference type="GlyGen" id="Q8RXD5">
    <property type="glycosylation" value="1 site"/>
</dbReference>
<dbReference type="PaxDb" id="3702-AT1G73260.1"/>
<dbReference type="ProteomicsDB" id="237034">
    <molecule id="Q8RXD5-1"/>
</dbReference>
<dbReference type="EnsemblPlants" id="AT1G73260.1">
    <molecule id="Q8RXD5-1"/>
    <property type="protein sequence ID" value="AT1G73260.1"/>
    <property type="gene ID" value="AT1G73260"/>
</dbReference>
<dbReference type="GeneID" id="843660"/>
<dbReference type="Gramene" id="AT1G73260.1">
    <molecule id="Q8RXD5-1"/>
    <property type="protein sequence ID" value="AT1G73260.1"/>
    <property type="gene ID" value="AT1G73260"/>
</dbReference>
<dbReference type="KEGG" id="ath:AT1G73260"/>
<dbReference type="Araport" id="AT1G73260"/>
<dbReference type="TAIR" id="AT1G73260">
    <property type="gene designation" value="KTI1"/>
</dbReference>
<dbReference type="eggNOG" id="ENOG502QWSQ">
    <property type="taxonomic scope" value="Eukaryota"/>
</dbReference>
<dbReference type="HOGENOM" id="CLU_090145_1_0_1"/>
<dbReference type="InParanoid" id="Q8RXD5"/>
<dbReference type="OMA" id="PCPYDIV"/>
<dbReference type="PhylomeDB" id="Q8RXD5"/>
<dbReference type="PRO" id="PR:Q8RXD5"/>
<dbReference type="Proteomes" id="UP000006548">
    <property type="component" value="Chromosome 1"/>
</dbReference>
<dbReference type="ExpressionAtlas" id="Q8RXD5">
    <property type="expression patterns" value="baseline and differential"/>
</dbReference>
<dbReference type="GO" id="GO:0005783">
    <property type="term" value="C:endoplasmic reticulum"/>
    <property type="evidence" value="ECO:0007669"/>
    <property type="project" value="UniProtKB-SubCell"/>
</dbReference>
<dbReference type="GO" id="GO:0005739">
    <property type="term" value="C:mitochondrion"/>
    <property type="evidence" value="ECO:0007005"/>
    <property type="project" value="TAIR"/>
</dbReference>
<dbReference type="GO" id="GO:0099503">
    <property type="term" value="C:secretory vesicle"/>
    <property type="evidence" value="ECO:0007005"/>
    <property type="project" value="TAIR"/>
</dbReference>
<dbReference type="GO" id="GO:0004869">
    <property type="term" value="F:cysteine-type endopeptidase inhibitor activity"/>
    <property type="evidence" value="ECO:0007669"/>
    <property type="project" value="UniProtKB-KW"/>
</dbReference>
<dbReference type="GO" id="GO:0004866">
    <property type="term" value="F:endopeptidase inhibitor activity"/>
    <property type="evidence" value="ECO:0000314"/>
    <property type="project" value="TAIR"/>
</dbReference>
<dbReference type="GO" id="GO:0004867">
    <property type="term" value="F:serine-type endopeptidase inhibitor activity"/>
    <property type="evidence" value="ECO:0007669"/>
    <property type="project" value="UniProtKB-KW"/>
</dbReference>
<dbReference type="GO" id="GO:0042742">
    <property type="term" value="P:defense response to bacterium"/>
    <property type="evidence" value="ECO:0000315"/>
    <property type="project" value="TAIR"/>
</dbReference>
<dbReference type="GO" id="GO:0012501">
    <property type="term" value="P:programmed cell death"/>
    <property type="evidence" value="ECO:0000315"/>
    <property type="project" value="TAIR"/>
</dbReference>
<dbReference type="GO" id="GO:0042542">
    <property type="term" value="P:response to hydrogen peroxide"/>
    <property type="evidence" value="ECO:0000270"/>
    <property type="project" value="TAIR"/>
</dbReference>
<dbReference type="GO" id="GO:0009625">
    <property type="term" value="P:response to insect"/>
    <property type="evidence" value="ECO:0000270"/>
    <property type="project" value="UniProtKB"/>
</dbReference>
<dbReference type="GO" id="GO:0002237">
    <property type="term" value="P:response to molecule of bacterial origin"/>
    <property type="evidence" value="ECO:0000270"/>
    <property type="project" value="UniProtKB"/>
</dbReference>
<dbReference type="GO" id="GO:0002238">
    <property type="term" value="P:response to molecule of fungal origin"/>
    <property type="evidence" value="ECO:0000270"/>
    <property type="project" value="UniProtKB"/>
</dbReference>
<dbReference type="GO" id="GO:0009624">
    <property type="term" value="P:response to nematode"/>
    <property type="evidence" value="ECO:0000270"/>
    <property type="project" value="UniProtKB"/>
</dbReference>
<dbReference type="GO" id="GO:0009751">
    <property type="term" value="P:response to salicylic acid"/>
    <property type="evidence" value="ECO:0000270"/>
    <property type="project" value="TAIR"/>
</dbReference>
<dbReference type="GO" id="GO:0009611">
    <property type="term" value="P:response to wounding"/>
    <property type="evidence" value="ECO:0000270"/>
    <property type="project" value="UniProtKB"/>
</dbReference>
<dbReference type="CDD" id="cd23366">
    <property type="entry name" value="beta-trefoil_STI_AtTPI-like"/>
    <property type="match status" value="1"/>
</dbReference>
<dbReference type="FunFam" id="2.80.10.50:FF:000113">
    <property type="entry name" value="Kunitz-type serine protease inhibitor DrTI"/>
    <property type="match status" value="1"/>
</dbReference>
<dbReference type="Gene3D" id="2.80.10.50">
    <property type="match status" value="1"/>
</dbReference>
<dbReference type="InterPro" id="IPR011065">
    <property type="entry name" value="Kunitz_inhibitor_STI-like_sf"/>
</dbReference>
<dbReference type="InterPro" id="IPR002160">
    <property type="entry name" value="Prot_inh_Kunz-lg"/>
</dbReference>
<dbReference type="PANTHER" id="PTHR33107">
    <property type="entry name" value="KUNITZ TRYPSIN INHIBITOR 2"/>
    <property type="match status" value="1"/>
</dbReference>
<dbReference type="PANTHER" id="PTHR33107:SF12">
    <property type="entry name" value="KUNITZ TRYPSIN INHIBITOR 4"/>
    <property type="match status" value="1"/>
</dbReference>
<dbReference type="Pfam" id="PF00197">
    <property type="entry name" value="Kunitz_legume"/>
    <property type="match status" value="1"/>
</dbReference>
<dbReference type="PRINTS" id="PR00291">
    <property type="entry name" value="KUNITZINHBTR"/>
</dbReference>
<dbReference type="SMART" id="SM00452">
    <property type="entry name" value="STI"/>
    <property type="match status" value="1"/>
</dbReference>
<dbReference type="SUPFAM" id="SSF50386">
    <property type="entry name" value="STI-like"/>
    <property type="match status" value="1"/>
</dbReference>
<dbReference type="PROSITE" id="PS00283">
    <property type="entry name" value="SOYBEAN_KUNITZ"/>
    <property type="match status" value="1"/>
</dbReference>
<protein>
    <recommendedName>
        <fullName evidence="10">Kunitz trypsin inhibitor 4</fullName>
        <shortName evidence="10">AtKTI4</shortName>
    </recommendedName>
    <alternativeName>
        <fullName evidence="9">Kunitz trypsin inhibitor 1</fullName>
        <shortName evidence="9">AtKTI1</shortName>
    </alternativeName>
    <alternativeName>
        <fullName evidence="8">Trypsin protease inhibitor</fullName>
    </alternativeName>
</protein>
<reference key="1">
    <citation type="journal article" date="2000" name="Nature">
        <title>Sequence and analysis of chromosome 1 of the plant Arabidopsis thaliana.</title>
        <authorList>
            <person name="Theologis A."/>
            <person name="Ecker J.R."/>
            <person name="Palm C.J."/>
            <person name="Federspiel N.A."/>
            <person name="Kaul S."/>
            <person name="White O."/>
            <person name="Alonso J."/>
            <person name="Altafi H."/>
            <person name="Araujo R."/>
            <person name="Bowman C.L."/>
            <person name="Brooks S.Y."/>
            <person name="Buehler E."/>
            <person name="Chan A."/>
            <person name="Chao Q."/>
            <person name="Chen H."/>
            <person name="Cheuk R.F."/>
            <person name="Chin C.W."/>
            <person name="Chung M.K."/>
            <person name="Conn L."/>
            <person name="Conway A.B."/>
            <person name="Conway A.R."/>
            <person name="Creasy T.H."/>
            <person name="Dewar K."/>
            <person name="Dunn P."/>
            <person name="Etgu P."/>
            <person name="Feldblyum T.V."/>
            <person name="Feng J.-D."/>
            <person name="Fong B."/>
            <person name="Fujii C.Y."/>
            <person name="Gill J.E."/>
            <person name="Goldsmith A.D."/>
            <person name="Haas B."/>
            <person name="Hansen N.F."/>
            <person name="Hughes B."/>
            <person name="Huizar L."/>
            <person name="Hunter J.L."/>
            <person name="Jenkins J."/>
            <person name="Johnson-Hopson C."/>
            <person name="Khan S."/>
            <person name="Khaykin E."/>
            <person name="Kim C.J."/>
            <person name="Koo H.L."/>
            <person name="Kremenetskaia I."/>
            <person name="Kurtz D.B."/>
            <person name="Kwan A."/>
            <person name="Lam B."/>
            <person name="Langin-Hooper S."/>
            <person name="Lee A."/>
            <person name="Lee J.M."/>
            <person name="Lenz C.A."/>
            <person name="Li J.H."/>
            <person name="Li Y.-P."/>
            <person name="Lin X."/>
            <person name="Liu S.X."/>
            <person name="Liu Z.A."/>
            <person name="Luros J.S."/>
            <person name="Maiti R."/>
            <person name="Marziali A."/>
            <person name="Militscher J."/>
            <person name="Miranda M."/>
            <person name="Nguyen M."/>
            <person name="Nierman W.C."/>
            <person name="Osborne B.I."/>
            <person name="Pai G."/>
            <person name="Peterson J."/>
            <person name="Pham P.K."/>
            <person name="Rizzo M."/>
            <person name="Rooney T."/>
            <person name="Rowley D."/>
            <person name="Sakano H."/>
            <person name="Salzberg S.L."/>
            <person name="Schwartz J.R."/>
            <person name="Shinn P."/>
            <person name="Southwick A.M."/>
            <person name="Sun H."/>
            <person name="Tallon L.J."/>
            <person name="Tambunga G."/>
            <person name="Toriumi M.J."/>
            <person name="Town C.D."/>
            <person name="Utterback T."/>
            <person name="Van Aken S."/>
            <person name="Vaysberg M."/>
            <person name="Vysotskaia V.S."/>
            <person name="Walker M."/>
            <person name="Wu D."/>
            <person name="Yu G."/>
            <person name="Fraser C.M."/>
            <person name="Venter J.C."/>
            <person name="Davis R.W."/>
        </authorList>
    </citation>
    <scope>NUCLEOTIDE SEQUENCE [LARGE SCALE GENOMIC DNA]</scope>
    <source>
        <strain>cv. Columbia</strain>
    </source>
</reference>
<reference key="2">
    <citation type="journal article" date="2017" name="Plant J.">
        <title>Araport11: a complete reannotation of the Arabidopsis thaliana reference genome.</title>
        <authorList>
            <person name="Cheng C.Y."/>
            <person name="Krishnakumar V."/>
            <person name="Chan A.P."/>
            <person name="Thibaud-Nissen F."/>
            <person name="Schobel S."/>
            <person name="Town C.D."/>
        </authorList>
    </citation>
    <scope>GENOME REANNOTATION</scope>
    <source>
        <strain>cv. Columbia</strain>
    </source>
</reference>
<reference key="3">
    <citation type="journal article" date="2003" name="Science">
        <title>Empirical analysis of transcriptional activity in the Arabidopsis genome.</title>
        <authorList>
            <person name="Yamada K."/>
            <person name="Lim J."/>
            <person name="Dale J.M."/>
            <person name="Chen H."/>
            <person name="Shinn P."/>
            <person name="Palm C.J."/>
            <person name="Southwick A.M."/>
            <person name="Wu H.C."/>
            <person name="Kim C.J."/>
            <person name="Nguyen M."/>
            <person name="Pham P.K."/>
            <person name="Cheuk R.F."/>
            <person name="Karlin-Newmann G."/>
            <person name="Liu S.X."/>
            <person name="Lam B."/>
            <person name="Sakano H."/>
            <person name="Wu T."/>
            <person name="Yu G."/>
            <person name="Miranda M."/>
            <person name="Quach H.L."/>
            <person name="Tripp M."/>
            <person name="Chang C.H."/>
            <person name="Lee J.M."/>
            <person name="Toriumi M.J."/>
            <person name="Chan M.M."/>
            <person name="Tang C.C."/>
            <person name="Onodera C.S."/>
            <person name="Deng J.M."/>
            <person name="Akiyama K."/>
            <person name="Ansari Y."/>
            <person name="Arakawa T."/>
            <person name="Banh J."/>
            <person name="Banno F."/>
            <person name="Bowser L."/>
            <person name="Brooks S.Y."/>
            <person name="Carninci P."/>
            <person name="Chao Q."/>
            <person name="Choy N."/>
            <person name="Enju A."/>
            <person name="Goldsmith A.D."/>
            <person name="Gurjal M."/>
            <person name="Hansen N.F."/>
            <person name="Hayashizaki Y."/>
            <person name="Johnson-Hopson C."/>
            <person name="Hsuan V.W."/>
            <person name="Iida K."/>
            <person name="Karnes M."/>
            <person name="Khan S."/>
            <person name="Koesema E."/>
            <person name="Ishida J."/>
            <person name="Jiang P.X."/>
            <person name="Jones T."/>
            <person name="Kawai J."/>
            <person name="Kamiya A."/>
            <person name="Meyers C."/>
            <person name="Nakajima M."/>
            <person name="Narusaka M."/>
            <person name="Seki M."/>
            <person name="Sakurai T."/>
            <person name="Satou M."/>
            <person name="Tamse R."/>
            <person name="Vaysberg M."/>
            <person name="Wallender E.K."/>
            <person name="Wong C."/>
            <person name="Yamamura Y."/>
            <person name="Yuan S."/>
            <person name="Shinozaki K."/>
            <person name="Davis R.W."/>
            <person name="Theologis A."/>
            <person name="Ecker J.R."/>
        </authorList>
    </citation>
    <scope>NUCLEOTIDE SEQUENCE [LARGE SCALE MRNA] (ISOFORMS 1 AND 2)</scope>
    <source>
        <strain>cv. Columbia</strain>
    </source>
</reference>
<reference key="4">
    <citation type="submission" date="2006-07" db="EMBL/GenBank/DDBJ databases">
        <title>Large-scale analysis of RIKEN Arabidopsis full-length (RAFL) cDNAs.</title>
        <authorList>
            <person name="Totoki Y."/>
            <person name="Seki M."/>
            <person name="Ishida J."/>
            <person name="Nakajima M."/>
            <person name="Enju A."/>
            <person name="Kamiya A."/>
            <person name="Narusaka M."/>
            <person name="Shin-i T."/>
            <person name="Nakagawa M."/>
            <person name="Sakamoto N."/>
            <person name="Oishi K."/>
            <person name="Kohara Y."/>
            <person name="Kobayashi M."/>
            <person name="Toyoda A."/>
            <person name="Sakaki Y."/>
            <person name="Sakurai T."/>
            <person name="Iida K."/>
            <person name="Akiyama K."/>
            <person name="Satou M."/>
            <person name="Toyoda T."/>
            <person name="Konagaya A."/>
            <person name="Carninci P."/>
            <person name="Kawai J."/>
            <person name="Hayashizaki Y."/>
            <person name="Shinozaki K."/>
        </authorList>
    </citation>
    <scope>NUCLEOTIDE SEQUENCE [LARGE SCALE MRNA] (ISOFORM 1)</scope>
    <source>
        <strain>cv. Columbia</strain>
    </source>
</reference>
<reference key="5">
    <citation type="journal article" date="2005" name="Plant J.">
        <title>Genome-wide expression profiling of the host response to root-knot nematode infection in Arabidopsis.</title>
        <authorList>
            <person name="Jammes F."/>
            <person name="Lecomte P."/>
            <person name="de Almeida-Engler J."/>
            <person name="Bitton F."/>
            <person name="Martin-Magniette M.L."/>
            <person name="Renou J.P."/>
            <person name="Abad P."/>
            <person name="Favery B."/>
        </authorList>
    </citation>
    <scope>TISSUE SPECIFICITY</scope>
    <scope>REGULATION BY NEMATODE</scope>
</reference>
<reference key="6">
    <citation type="journal article" date="2007" name="Plant Physiol.">
        <title>Oviposition by pierid butterflies triggers defense responses in Arabidopsis.</title>
        <authorList>
            <person name="Little D."/>
            <person name="Gouhier-Darimont C."/>
            <person name="Bruessow F."/>
            <person name="Reymond P."/>
        </authorList>
    </citation>
    <scope>INDUCTION BY PIERIS BRASSICAE OVIPOSITION</scope>
</reference>
<reference key="7">
    <citation type="journal article" date="2008" name="Mol. Plant">
        <title>Kunitz trypsin inhibitor: an antagonist of cell death triggered by phytopathogens and fumonisin b1 in Arabidopsis.</title>
        <authorList>
            <person name="Li J."/>
            <person name="Brader G."/>
            <person name="Palva E.T."/>
        </authorList>
    </citation>
    <scope>FUNCTION</scope>
    <scope>INDUCTION BY BIOTIC AND ABIOTIC STRESSES</scope>
    <scope>DISRUPTION PHENOTYPE</scope>
    <source>
        <strain>cv. Columbia</strain>
    </source>
</reference>
<reference key="8">
    <citation type="journal article" date="2018" name="Front. Plant Sci.">
        <title>Arabidopsis Kunitz trypsin inhibitors in defense against spider mites.</title>
        <authorList>
            <person name="Arnaiz A."/>
            <person name="Talavera-Mateo L."/>
            <person name="Gonzalez-Melendi P."/>
            <person name="Martinez M."/>
            <person name="Diaz I."/>
            <person name="Santamaria M.E."/>
        </authorList>
    </citation>
    <scope>FUNCTION</scope>
    <scope>SUBCELLULAR LOCATION</scope>
    <scope>INDUCTION BY SPIDER MITES</scope>
    <scope>GENE FAMILY</scope>
    <scope>NOMENCLATURE</scope>
</reference>
<comment type="function">
    <text evidence="6 7">Exhibits Kunitz trypsin protease inhibitor activity (PubMed:19825555). Involved in modulating programmed cell death (PCD) in plant-pathogen interactions (PubMed:19825555). Can inhibit both serine proteases and cysteine proteases (PubMed:30042779). May be involved in the modulation of the proteases that participate in the hydrolysis of dietary proteins in the gut of spider mites (PubMed:30042779).</text>
</comment>
<comment type="subcellular location">
    <subcellularLocation>
        <location evidence="7">Endoplasmic reticulum</location>
    </subcellularLocation>
</comment>
<comment type="alternative products">
    <event type="alternative splicing"/>
    <isoform>
        <id>Q8RXD5-1</id>
        <name>1</name>
        <sequence type="displayed"/>
    </isoform>
    <isoform>
        <id>Q8RXD5-2</id>
        <name>2</name>
        <sequence type="described" ref="VSP_058577"/>
    </isoform>
</comment>
<comment type="tissue specificity">
    <text evidence="4">Expressed in roots.</text>
</comment>
<comment type="induction">
    <text evidence="4 5 6 7">Down-regulated after root-knot nematode infection (PubMed:16236154). Accumulates locally within 72 hours after P.brassicae butterflies oviposition (PubMed:17142483). Induced late in response to bacterial and fungal elicitors (e.g. Pst DC3000 and Ecc culture filtrates), and upon wounding, salicylic acid (SA) and hydrogen peroxide H(2)O(2) treatments (PubMed:19825555). Induced by infestation with spider mites (PubMed:30042779).</text>
</comment>
<comment type="disruption phenotype">
    <text evidence="6">Enhanced lesion development after infiltration of leaf tissue with the programmed cell death (PCD)-eliciting fungal toxin fumonisin B1 (FB1) or the avirulent bacterial pathogen P.syringae pv. tomato DC3000 carrying avrB (Pst avrB). Enhanced resistance to the virulent pathogen E.carotovora subsp. carotovora SCC1.</text>
</comment>
<comment type="similarity">
    <text evidence="11">Belongs to the protease inhibitor I3 (leguminous Kunitz-type inhibitor) family.</text>
</comment>
<comment type="sequence caution" evidence="11">
    <conflict type="erroneous initiation">
        <sequence resource="EMBL-CDS" id="AAG52121"/>
    </conflict>
    <text>Truncated N-terminus.</text>
</comment>
<feature type="signal peptide" evidence="2">
    <location>
        <begin position="1"/>
        <end position="28"/>
    </location>
</feature>
<feature type="chain" id="PRO_5007714371" description="Kunitz trypsin inhibitor 4">
    <location>
        <begin position="29"/>
        <end position="215"/>
    </location>
</feature>
<feature type="glycosylation site" description="N-linked (GlcNAc...) asparagine" evidence="3">
    <location>
        <position position="206"/>
    </location>
</feature>
<feature type="disulfide bond" evidence="1">
    <location>
        <begin position="66"/>
        <end position="112"/>
    </location>
</feature>
<feature type="disulfide bond" evidence="1">
    <location>
        <begin position="165"/>
        <end position="176"/>
    </location>
</feature>
<feature type="splice variant" id="VSP_058577" description="In isoform 2.">
    <original>VMFKKANVTEVSSKTM</original>
    <variation>GYVQKS</variation>
    <location>
        <begin position="200"/>
        <end position="215"/>
    </location>
</feature>
<feature type="sequence conflict" description="In Ref. 3; AAN15685/AAK96757." evidence="11" ref="3">
    <original>K</original>
    <variation>R</variation>
    <location>
        <position position="128"/>
    </location>
</feature>
<name>KTI4_ARATH</name>
<gene>
    <name evidence="10" type="primary">KTI4</name>
    <name evidence="9" type="synonym">KTI1</name>
    <name evidence="8" type="synonym">TPI</name>
    <name evidence="12" type="ordered locus">At1g73260</name>
    <name evidence="13" type="ORF">T18K17.7</name>
</gene>
<accession>Q8RXD5</accession>
<accession>Q8H190</accession>
<accession>Q93Y29</accession>
<accession>Q9CAT9</accession>
<proteinExistence type="evidence at transcript level"/>